<keyword id="KW-0433">Leucine-rich repeat</keyword>
<keyword id="KW-1185">Reference proteome</keyword>
<keyword id="KW-0677">Repeat</keyword>
<protein>
    <recommendedName>
        <fullName>Putative F-box/LRR-repeat protein At4g15060</fullName>
    </recommendedName>
</protein>
<name>FBL93_ARATH</name>
<gene>
    <name type="ordered locus">At4g15060</name>
    <name type="ORF">dl3575w</name>
    <name type="ORF">FCAALL.180</name>
</gene>
<proteinExistence type="predicted"/>
<comment type="sequence caution" evidence="1">
    <conflict type="erroneous gene model prediction">
        <sequence resource="EMBL-CDS" id="AEE83548"/>
    </conflict>
</comment>
<comment type="sequence caution" evidence="1">
    <conflict type="erroneous gene model prediction">
        <sequence resource="EMBL-CDS" id="CAB10285"/>
    </conflict>
</comment>
<comment type="sequence caution" evidence="1">
    <conflict type="erroneous gene model prediction">
        <sequence resource="EMBL-CDS" id="CAB78548"/>
    </conflict>
</comment>
<dbReference type="EMBL" id="Z97337">
    <property type="protein sequence ID" value="CAB10285.1"/>
    <property type="status" value="ALT_SEQ"/>
    <property type="molecule type" value="Genomic_DNA"/>
</dbReference>
<dbReference type="EMBL" id="AL161540">
    <property type="protein sequence ID" value="CAB78548.1"/>
    <property type="status" value="ALT_SEQ"/>
    <property type="molecule type" value="Genomic_DNA"/>
</dbReference>
<dbReference type="EMBL" id="CP002687">
    <property type="protein sequence ID" value="AEE83548.1"/>
    <property type="status" value="ALT_SEQ"/>
    <property type="molecule type" value="Genomic_DNA"/>
</dbReference>
<dbReference type="EMBL" id="CP002687">
    <property type="protein sequence ID" value="ANM66271.1"/>
    <property type="molecule type" value="Genomic_DNA"/>
</dbReference>
<dbReference type="PIR" id="C71414">
    <property type="entry name" value="C71414"/>
</dbReference>
<dbReference type="RefSeq" id="NP_001328179.1">
    <property type="nucleotide sequence ID" value="NM_001340990.1"/>
</dbReference>
<dbReference type="RefSeq" id="NP_193242.3">
    <property type="nucleotide sequence ID" value="NM_117593.3"/>
</dbReference>
<dbReference type="PaxDb" id="3702-AT4G15060.1"/>
<dbReference type="ProteomicsDB" id="222586"/>
<dbReference type="EnsemblPlants" id="AT4G15060.2">
    <property type="protein sequence ID" value="AT4G15060.2"/>
    <property type="gene ID" value="AT4G15060"/>
</dbReference>
<dbReference type="GeneID" id="827169"/>
<dbReference type="Gramene" id="AT4G15060.2">
    <property type="protein sequence ID" value="AT4G15060.2"/>
    <property type="gene ID" value="AT4G15060"/>
</dbReference>
<dbReference type="KEGG" id="ath:AT4G15060"/>
<dbReference type="Araport" id="AT4G15060"/>
<dbReference type="TAIR" id="AT4G15060">
    <property type="gene designation" value="FOL2"/>
</dbReference>
<dbReference type="InParanoid" id="O23360"/>
<dbReference type="OMA" id="DHTDICE"/>
<dbReference type="PhylomeDB" id="O23360"/>
<dbReference type="PRO" id="PR:O23360"/>
<dbReference type="Proteomes" id="UP000006548">
    <property type="component" value="Chromosome 4"/>
</dbReference>
<dbReference type="ExpressionAtlas" id="O23360">
    <property type="expression patterns" value="baseline and differential"/>
</dbReference>
<dbReference type="CDD" id="cd22160">
    <property type="entry name" value="F-box_AtFBL13-like"/>
    <property type="match status" value="1"/>
</dbReference>
<dbReference type="Gene3D" id="3.80.10.10">
    <property type="entry name" value="Ribonuclease Inhibitor"/>
    <property type="match status" value="1"/>
</dbReference>
<dbReference type="InterPro" id="IPR036047">
    <property type="entry name" value="F-box-like_dom_sf"/>
</dbReference>
<dbReference type="InterPro" id="IPR053781">
    <property type="entry name" value="F-box_AtFBL13-like"/>
</dbReference>
<dbReference type="InterPro" id="IPR001810">
    <property type="entry name" value="F-box_dom"/>
</dbReference>
<dbReference type="InterPro" id="IPR050232">
    <property type="entry name" value="FBL13/AtMIF1-like"/>
</dbReference>
<dbReference type="InterPro" id="IPR032675">
    <property type="entry name" value="LRR_dom_sf"/>
</dbReference>
<dbReference type="InterPro" id="IPR055411">
    <property type="entry name" value="LRR_FXL15/At3g58940/PEG3-like"/>
</dbReference>
<dbReference type="PANTHER" id="PTHR31900">
    <property type="entry name" value="F-BOX/RNI SUPERFAMILY PROTEIN-RELATED"/>
    <property type="match status" value="1"/>
</dbReference>
<dbReference type="PANTHER" id="PTHR31900:SF28">
    <property type="entry name" value="FBD DOMAIN-CONTAINING PROTEIN"/>
    <property type="match status" value="1"/>
</dbReference>
<dbReference type="Pfam" id="PF00646">
    <property type="entry name" value="F-box"/>
    <property type="match status" value="1"/>
</dbReference>
<dbReference type="Pfam" id="PF24758">
    <property type="entry name" value="LRR_At5g56370"/>
    <property type="match status" value="1"/>
</dbReference>
<dbReference type="SUPFAM" id="SSF81383">
    <property type="entry name" value="F-box domain"/>
    <property type="match status" value="1"/>
</dbReference>
<dbReference type="SUPFAM" id="SSF52047">
    <property type="entry name" value="RNI-like"/>
    <property type="match status" value="1"/>
</dbReference>
<reference key="1">
    <citation type="journal article" date="1998" name="Nature">
        <title>Analysis of 1.9 Mb of contiguous sequence from chromosome 4 of Arabidopsis thaliana.</title>
        <authorList>
            <person name="Bevan M."/>
            <person name="Bancroft I."/>
            <person name="Bent E."/>
            <person name="Love K."/>
            <person name="Goodman H.M."/>
            <person name="Dean C."/>
            <person name="Bergkamp R."/>
            <person name="Dirkse W."/>
            <person name="van Staveren M."/>
            <person name="Stiekema W."/>
            <person name="Drost L."/>
            <person name="Ridley P."/>
            <person name="Hudson S.-A."/>
            <person name="Patel K."/>
            <person name="Murphy G."/>
            <person name="Piffanelli P."/>
            <person name="Wedler H."/>
            <person name="Wedler E."/>
            <person name="Wambutt R."/>
            <person name="Weitzenegger T."/>
            <person name="Pohl T."/>
            <person name="Terryn N."/>
            <person name="Gielen J."/>
            <person name="Villarroel R."/>
            <person name="De Clercq R."/>
            <person name="van Montagu M."/>
            <person name="Lecharny A."/>
            <person name="Aubourg S."/>
            <person name="Gy I."/>
            <person name="Kreis M."/>
            <person name="Lao N."/>
            <person name="Kavanagh T."/>
            <person name="Hempel S."/>
            <person name="Kotter P."/>
            <person name="Entian K.-D."/>
            <person name="Rieger M."/>
            <person name="Schaefer M."/>
            <person name="Funk B."/>
            <person name="Mueller-Auer S."/>
            <person name="Silvey M."/>
            <person name="James R."/>
            <person name="Monfort A."/>
            <person name="Pons A."/>
            <person name="Puigdomenech P."/>
            <person name="Douka A."/>
            <person name="Voukelatou E."/>
            <person name="Milioni D."/>
            <person name="Hatzopoulos P."/>
            <person name="Piravandi E."/>
            <person name="Obermaier B."/>
            <person name="Hilbert H."/>
            <person name="Duesterhoeft A."/>
            <person name="Moores T."/>
            <person name="Jones J.D.G."/>
            <person name="Eneva T."/>
            <person name="Palme K."/>
            <person name="Benes V."/>
            <person name="Rechmann S."/>
            <person name="Ansorge W."/>
            <person name="Cooke R."/>
            <person name="Berger C."/>
            <person name="Delseny M."/>
            <person name="Voet M."/>
            <person name="Volckaert G."/>
            <person name="Mewes H.-W."/>
            <person name="Klosterman S."/>
            <person name="Schueller C."/>
            <person name="Chalwatzis N."/>
        </authorList>
    </citation>
    <scope>NUCLEOTIDE SEQUENCE [LARGE SCALE GENOMIC DNA]</scope>
    <source>
        <strain>cv. Columbia</strain>
    </source>
</reference>
<reference key="2">
    <citation type="journal article" date="1999" name="Nature">
        <title>Sequence and analysis of chromosome 4 of the plant Arabidopsis thaliana.</title>
        <authorList>
            <person name="Mayer K.F.X."/>
            <person name="Schueller C."/>
            <person name="Wambutt R."/>
            <person name="Murphy G."/>
            <person name="Volckaert G."/>
            <person name="Pohl T."/>
            <person name="Duesterhoeft A."/>
            <person name="Stiekema W."/>
            <person name="Entian K.-D."/>
            <person name="Terryn N."/>
            <person name="Harris B."/>
            <person name="Ansorge W."/>
            <person name="Brandt P."/>
            <person name="Grivell L.A."/>
            <person name="Rieger M."/>
            <person name="Weichselgartner M."/>
            <person name="de Simone V."/>
            <person name="Obermaier B."/>
            <person name="Mache R."/>
            <person name="Mueller M."/>
            <person name="Kreis M."/>
            <person name="Delseny M."/>
            <person name="Puigdomenech P."/>
            <person name="Watson M."/>
            <person name="Schmidtheini T."/>
            <person name="Reichert B."/>
            <person name="Portetelle D."/>
            <person name="Perez-Alonso M."/>
            <person name="Boutry M."/>
            <person name="Bancroft I."/>
            <person name="Vos P."/>
            <person name="Hoheisel J."/>
            <person name="Zimmermann W."/>
            <person name="Wedler H."/>
            <person name="Ridley P."/>
            <person name="Langham S.-A."/>
            <person name="McCullagh B."/>
            <person name="Bilham L."/>
            <person name="Robben J."/>
            <person name="van der Schueren J."/>
            <person name="Grymonprez B."/>
            <person name="Chuang Y.-J."/>
            <person name="Vandenbussche F."/>
            <person name="Braeken M."/>
            <person name="Weltjens I."/>
            <person name="Voet M."/>
            <person name="Bastiaens I."/>
            <person name="Aert R."/>
            <person name="Defoor E."/>
            <person name="Weitzenegger T."/>
            <person name="Bothe G."/>
            <person name="Ramsperger U."/>
            <person name="Hilbert H."/>
            <person name="Braun M."/>
            <person name="Holzer E."/>
            <person name="Brandt A."/>
            <person name="Peters S."/>
            <person name="van Staveren M."/>
            <person name="Dirkse W."/>
            <person name="Mooijman P."/>
            <person name="Klein Lankhorst R."/>
            <person name="Rose M."/>
            <person name="Hauf J."/>
            <person name="Koetter P."/>
            <person name="Berneiser S."/>
            <person name="Hempel S."/>
            <person name="Feldpausch M."/>
            <person name="Lamberth S."/>
            <person name="Van den Daele H."/>
            <person name="De Keyser A."/>
            <person name="Buysshaert C."/>
            <person name="Gielen J."/>
            <person name="Villarroel R."/>
            <person name="De Clercq R."/>
            <person name="van Montagu M."/>
            <person name="Rogers J."/>
            <person name="Cronin A."/>
            <person name="Quail M.A."/>
            <person name="Bray-Allen S."/>
            <person name="Clark L."/>
            <person name="Doggett J."/>
            <person name="Hall S."/>
            <person name="Kay M."/>
            <person name="Lennard N."/>
            <person name="McLay K."/>
            <person name="Mayes R."/>
            <person name="Pettett A."/>
            <person name="Rajandream M.A."/>
            <person name="Lyne M."/>
            <person name="Benes V."/>
            <person name="Rechmann S."/>
            <person name="Borkova D."/>
            <person name="Bloecker H."/>
            <person name="Scharfe M."/>
            <person name="Grimm M."/>
            <person name="Loehnert T.-H."/>
            <person name="Dose S."/>
            <person name="de Haan M."/>
            <person name="Maarse A.C."/>
            <person name="Schaefer M."/>
            <person name="Mueller-Auer S."/>
            <person name="Gabel C."/>
            <person name="Fuchs M."/>
            <person name="Fartmann B."/>
            <person name="Granderath K."/>
            <person name="Dauner D."/>
            <person name="Herzl A."/>
            <person name="Neumann S."/>
            <person name="Argiriou A."/>
            <person name="Vitale D."/>
            <person name="Liguori R."/>
            <person name="Piravandi E."/>
            <person name="Massenet O."/>
            <person name="Quigley F."/>
            <person name="Clabauld G."/>
            <person name="Muendlein A."/>
            <person name="Felber R."/>
            <person name="Schnabl S."/>
            <person name="Hiller R."/>
            <person name="Schmidt W."/>
            <person name="Lecharny A."/>
            <person name="Aubourg S."/>
            <person name="Chefdor F."/>
            <person name="Cooke R."/>
            <person name="Berger C."/>
            <person name="Monfort A."/>
            <person name="Casacuberta E."/>
            <person name="Gibbons T."/>
            <person name="Weber N."/>
            <person name="Vandenbol M."/>
            <person name="Bargues M."/>
            <person name="Terol J."/>
            <person name="Torres A."/>
            <person name="Perez-Perez A."/>
            <person name="Purnelle B."/>
            <person name="Bent E."/>
            <person name="Johnson S."/>
            <person name="Tacon D."/>
            <person name="Jesse T."/>
            <person name="Heijnen L."/>
            <person name="Schwarz S."/>
            <person name="Scholler P."/>
            <person name="Heber S."/>
            <person name="Francs P."/>
            <person name="Bielke C."/>
            <person name="Frishman D."/>
            <person name="Haase D."/>
            <person name="Lemcke K."/>
            <person name="Mewes H.-W."/>
            <person name="Stocker S."/>
            <person name="Zaccaria P."/>
            <person name="Bevan M."/>
            <person name="Wilson R.K."/>
            <person name="de la Bastide M."/>
            <person name="Habermann K."/>
            <person name="Parnell L."/>
            <person name="Dedhia N."/>
            <person name="Gnoj L."/>
            <person name="Schutz K."/>
            <person name="Huang E."/>
            <person name="Spiegel L."/>
            <person name="Sekhon M."/>
            <person name="Murray J."/>
            <person name="Sheet P."/>
            <person name="Cordes M."/>
            <person name="Abu-Threideh J."/>
            <person name="Stoneking T."/>
            <person name="Kalicki J."/>
            <person name="Graves T."/>
            <person name="Harmon G."/>
            <person name="Edwards J."/>
            <person name="Latreille P."/>
            <person name="Courtney L."/>
            <person name="Cloud J."/>
            <person name="Abbott A."/>
            <person name="Scott K."/>
            <person name="Johnson D."/>
            <person name="Minx P."/>
            <person name="Bentley D."/>
            <person name="Fulton B."/>
            <person name="Miller N."/>
            <person name="Greco T."/>
            <person name="Kemp K."/>
            <person name="Kramer J."/>
            <person name="Fulton L."/>
            <person name="Mardis E."/>
            <person name="Dante M."/>
            <person name="Pepin K."/>
            <person name="Hillier L.W."/>
            <person name="Nelson J."/>
            <person name="Spieth J."/>
            <person name="Ryan E."/>
            <person name="Andrews S."/>
            <person name="Geisel C."/>
            <person name="Layman D."/>
            <person name="Du H."/>
            <person name="Ali J."/>
            <person name="Berghoff A."/>
            <person name="Jones K."/>
            <person name="Drone K."/>
            <person name="Cotton M."/>
            <person name="Joshu C."/>
            <person name="Antonoiu B."/>
            <person name="Zidanic M."/>
            <person name="Strong C."/>
            <person name="Sun H."/>
            <person name="Lamar B."/>
            <person name="Yordan C."/>
            <person name="Ma P."/>
            <person name="Zhong J."/>
            <person name="Preston R."/>
            <person name="Vil D."/>
            <person name="Shekher M."/>
            <person name="Matero A."/>
            <person name="Shah R."/>
            <person name="Swaby I.K."/>
            <person name="O'Shaughnessy A."/>
            <person name="Rodriguez M."/>
            <person name="Hoffman J."/>
            <person name="Till S."/>
            <person name="Granat S."/>
            <person name="Shohdy N."/>
            <person name="Hasegawa A."/>
            <person name="Hameed A."/>
            <person name="Lodhi M."/>
            <person name="Johnson A."/>
            <person name="Chen E."/>
            <person name="Marra M.A."/>
            <person name="Martienssen R."/>
            <person name="McCombie W.R."/>
        </authorList>
    </citation>
    <scope>NUCLEOTIDE SEQUENCE [LARGE SCALE GENOMIC DNA]</scope>
    <source>
        <strain>cv. Columbia</strain>
    </source>
</reference>
<reference key="3">
    <citation type="journal article" date="2017" name="Plant J.">
        <title>Araport11: a complete reannotation of the Arabidopsis thaliana reference genome.</title>
        <authorList>
            <person name="Cheng C.Y."/>
            <person name="Krishnakumar V."/>
            <person name="Chan A.P."/>
            <person name="Thibaud-Nissen F."/>
            <person name="Schobel S."/>
            <person name="Town C.D."/>
        </authorList>
    </citation>
    <scope>GENOME REANNOTATION</scope>
    <source>
        <strain>cv. Columbia</strain>
    </source>
</reference>
<organism>
    <name type="scientific">Arabidopsis thaliana</name>
    <name type="common">Mouse-ear cress</name>
    <dbReference type="NCBI Taxonomy" id="3702"/>
    <lineage>
        <taxon>Eukaryota</taxon>
        <taxon>Viridiplantae</taxon>
        <taxon>Streptophyta</taxon>
        <taxon>Embryophyta</taxon>
        <taxon>Tracheophyta</taxon>
        <taxon>Spermatophyta</taxon>
        <taxon>Magnoliopsida</taxon>
        <taxon>eudicotyledons</taxon>
        <taxon>Gunneridae</taxon>
        <taxon>Pentapetalae</taxon>
        <taxon>rosids</taxon>
        <taxon>malvids</taxon>
        <taxon>Brassicales</taxon>
        <taxon>Brassicaceae</taxon>
        <taxon>Camelineae</taxon>
        <taxon>Arabidopsis</taxon>
    </lineage>
</organism>
<sequence>MSTVRESWLKPKKNIQTNLGDYEDMDKISRLPDDLLVKVLLFLPTKIAVSTSILSKRWEFLWMWLPKLEYHNTNYSASEEQRLRSFINLNLQLHRAPIIESLRLKFSLGRSIKPQNIKQWIIIAVFRCVRELSINLFPLYCIENPAKLPSSLYISKSLVILKLKDQILVDVPRMAYLPSLKYLLLKRVTYKDSNSLHQLLSSCPVLKNLVVERDEYNHDETLSITVSSLQRLTLKISRGGSFDELVINTPSLKYFKLTDYLGECETELDDDSYSYVFKDMPKLEEAHIDSTYPDIGKFVRSITSVKRLSLCVKVNAEEALYREGICFKQLEHLKLCPCDSNWSKLLARLLKDSPNLRELEIKLNKDHKASFDDPACLENQLNYVVQSSIPSLERFTWTWIYGSQNEIDYLEKLKKRLLLTNWQNLV</sequence>
<evidence type="ECO:0000305" key="1"/>
<accession>O23360</accession>
<accession>F4JJC9</accession>
<feature type="chain" id="PRO_0000283118" description="Putative F-box/LRR-repeat protein At4g15060">
    <location>
        <begin position="1"/>
        <end position="426"/>
    </location>
</feature>
<feature type="domain" description="F-box">
    <location>
        <begin position="25"/>
        <end position="71"/>
    </location>
</feature>
<feature type="repeat" description="LRR 1">
    <location>
        <begin position="50"/>
        <end position="75"/>
    </location>
</feature>
<feature type="repeat" description="LRR 2">
    <location>
        <begin position="80"/>
        <end position="106"/>
    </location>
</feature>
<feature type="repeat" description="LRR 3">
    <location>
        <begin position="160"/>
        <end position="187"/>
    </location>
</feature>
<feature type="repeat" description="LRR 4">
    <location>
        <begin position="188"/>
        <end position="213"/>
    </location>
</feature>
<feature type="repeat" description="LRR 5">
    <location>
        <begin position="221"/>
        <end position="259"/>
    </location>
</feature>
<feature type="repeat" description="LRR 6">
    <location>
        <begin position="265"/>
        <end position="290"/>
    </location>
</feature>
<feature type="repeat" description="LRR 7">
    <location>
        <begin position="311"/>
        <end position="337"/>
    </location>
</feature>
<feature type="repeat" description="LRR 8">
    <location>
        <begin position="338"/>
        <end position="363"/>
    </location>
</feature>
<feature type="repeat" description="LRR 9">
    <location>
        <begin position="373"/>
        <end position="399"/>
    </location>
</feature>